<evidence type="ECO:0000255" key="1">
    <source>
        <dbReference type="HAMAP-Rule" id="MF_01954"/>
    </source>
</evidence>
<feature type="chain" id="PRO_0000234252" description="Urease subunit beta">
    <location>
        <begin position="1"/>
        <end position="113"/>
    </location>
</feature>
<accession>Q2Y9M8</accession>
<protein>
    <recommendedName>
        <fullName evidence="1">Urease subunit beta</fullName>
        <ecNumber evidence="1">3.5.1.5</ecNumber>
    </recommendedName>
    <alternativeName>
        <fullName evidence="1">Urea amidohydrolase subunit beta</fullName>
    </alternativeName>
</protein>
<gene>
    <name evidence="1" type="primary">ureB</name>
    <name type="ordered locus">Nmul_A1240</name>
</gene>
<name>URE2_NITMU</name>
<comment type="catalytic activity">
    <reaction evidence="1">
        <text>urea + 2 H2O + H(+) = hydrogencarbonate + 2 NH4(+)</text>
        <dbReference type="Rhea" id="RHEA:20557"/>
        <dbReference type="ChEBI" id="CHEBI:15377"/>
        <dbReference type="ChEBI" id="CHEBI:15378"/>
        <dbReference type="ChEBI" id="CHEBI:16199"/>
        <dbReference type="ChEBI" id="CHEBI:17544"/>
        <dbReference type="ChEBI" id="CHEBI:28938"/>
        <dbReference type="EC" id="3.5.1.5"/>
    </reaction>
</comment>
<comment type="pathway">
    <text evidence="1">Nitrogen metabolism; urea degradation; CO(2) and NH(3) from urea (urease route): step 1/1.</text>
</comment>
<comment type="subunit">
    <text evidence="1">Heterotrimer of UreA (gamma), UreB (beta) and UreC (alpha) subunits. Three heterotrimers associate to form the active enzyme.</text>
</comment>
<comment type="subcellular location">
    <subcellularLocation>
        <location evidence="1">Cytoplasm</location>
    </subcellularLocation>
</comment>
<comment type="similarity">
    <text evidence="1">Belongs to the urease beta subunit family.</text>
</comment>
<organism>
    <name type="scientific">Nitrosospira multiformis (strain ATCC 25196 / NCIMB 11849 / C 71)</name>
    <dbReference type="NCBI Taxonomy" id="323848"/>
    <lineage>
        <taxon>Bacteria</taxon>
        <taxon>Pseudomonadati</taxon>
        <taxon>Pseudomonadota</taxon>
        <taxon>Betaproteobacteria</taxon>
        <taxon>Nitrosomonadales</taxon>
        <taxon>Nitrosomonadaceae</taxon>
        <taxon>Nitrosospira</taxon>
    </lineage>
</organism>
<proteinExistence type="inferred from homology"/>
<dbReference type="EC" id="3.5.1.5" evidence="1"/>
<dbReference type="EMBL" id="CP000103">
    <property type="protein sequence ID" value="ABB74543.1"/>
    <property type="molecule type" value="Genomic_DNA"/>
</dbReference>
<dbReference type="RefSeq" id="WP_011380584.1">
    <property type="nucleotide sequence ID" value="NC_007614.1"/>
</dbReference>
<dbReference type="SMR" id="Q2Y9M8"/>
<dbReference type="STRING" id="323848.Nmul_A1240"/>
<dbReference type="KEGG" id="nmu:Nmul_A1240"/>
<dbReference type="eggNOG" id="COG0832">
    <property type="taxonomic scope" value="Bacteria"/>
</dbReference>
<dbReference type="HOGENOM" id="CLU_129707_1_1_4"/>
<dbReference type="OrthoDB" id="9797217at2"/>
<dbReference type="UniPathway" id="UPA00258">
    <property type="reaction ID" value="UER00370"/>
</dbReference>
<dbReference type="Proteomes" id="UP000002718">
    <property type="component" value="Chromosome"/>
</dbReference>
<dbReference type="GO" id="GO:0035550">
    <property type="term" value="C:urease complex"/>
    <property type="evidence" value="ECO:0007669"/>
    <property type="project" value="InterPro"/>
</dbReference>
<dbReference type="GO" id="GO:0009039">
    <property type="term" value="F:urease activity"/>
    <property type="evidence" value="ECO:0007669"/>
    <property type="project" value="UniProtKB-UniRule"/>
</dbReference>
<dbReference type="GO" id="GO:0043419">
    <property type="term" value="P:urea catabolic process"/>
    <property type="evidence" value="ECO:0007669"/>
    <property type="project" value="UniProtKB-UniRule"/>
</dbReference>
<dbReference type="CDD" id="cd00407">
    <property type="entry name" value="Urease_beta"/>
    <property type="match status" value="1"/>
</dbReference>
<dbReference type="FunFam" id="2.10.150.10:FF:000001">
    <property type="entry name" value="Urease subunit beta"/>
    <property type="match status" value="1"/>
</dbReference>
<dbReference type="Gene3D" id="2.10.150.10">
    <property type="entry name" value="Urease, beta subunit"/>
    <property type="match status" value="1"/>
</dbReference>
<dbReference type="HAMAP" id="MF_01954">
    <property type="entry name" value="Urease_beta"/>
    <property type="match status" value="1"/>
</dbReference>
<dbReference type="InterPro" id="IPR002019">
    <property type="entry name" value="Urease_beta-like"/>
</dbReference>
<dbReference type="InterPro" id="IPR036461">
    <property type="entry name" value="Urease_betasu_sf"/>
</dbReference>
<dbReference type="InterPro" id="IPR050069">
    <property type="entry name" value="Urease_subunit"/>
</dbReference>
<dbReference type="NCBIfam" id="NF009682">
    <property type="entry name" value="PRK13203.1"/>
    <property type="match status" value="1"/>
</dbReference>
<dbReference type="NCBIfam" id="TIGR00192">
    <property type="entry name" value="urease_beta"/>
    <property type="match status" value="1"/>
</dbReference>
<dbReference type="PANTHER" id="PTHR33569">
    <property type="entry name" value="UREASE"/>
    <property type="match status" value="1"/>
</dbReference>
<dbReference type="PANTHER" id="PTHR33569:SF1">
    <property type="entry name" value="UREASE"/>
    <property type="match status" value="1"/>
</dbReference>
<dbReference type="Pfam" id="PF00699">
    <property type="entry name" value="Urease_beta"/>
    <property type="match status" value="1"/>
</dbReference>
<dbReference type="SUPFAM" id="SSF51278">
    <property type="entry name" value="Urease, beta-subunit"/>
    <property type="match status" value="1"/>
</dbReference>
<keyword id="KW-0963">Cytoplasm</keyword>
<keyword id="KW-0378">Hydrolase</keyword>
<keyword id="KW-1185">Reference proteome</keyword>
<reference key="1">
    <citation type="submission" date="2005-08" db="EMBL/GenBank/DDBJ databases">
        <title>Complete sequence of chromosome 1 of Nitrosospira multiformis ATCC 25196.</title>
        <authorList>
            <person name="Copeland A."/>
            <person name="Lucas S."/>
            <person name="Lapidus A."/>
            <person name="Barry K."/>
            <person name="Detter J.C."/>
            <person name="Glavina T."/>
            <person name="Hammon N."/>
            <person name="Israni S."/>
            <person name="Pitluck S."/>
            <person name="Chain P."/>
            <person name="Malfatti S."/>
            <person name="Shin M."/>
            <person name="Vergez L."/>
            <person name="Schmutz J."/>
            <person name="Larimer F."/>
            <person name="Land M."/>
            <person name="Hauser L."/>
            <person name="Kyrpides N."/>
            <person name="Lykidis A."/>
            <person name="Richardson P."/>
        </authorList>
    </citation>
    <scope>NUCLEOTIDE SEQUENCE [LARGE SCALE GENOMIC DNA]</scope>
    <source>
        <strain>ATCC 25196 / NCIMB 11849 / C 71</strain>
    </source>
</reference>
<sequence length="113" mass="12664">MAKTVRKARDPLIPGEITTQPGEIELNVGRKTKTLKVANGGDRPIQIGSHFHFYEVNSAMKFDREEAYGMRLNIMAGTAVRFEPGQERTVELVELAGNRIVYGFNQKVMGKLK</sequence>